<dbReference type="EMBL" id="X51320">
    <property type="status" value="NOT_ANNOTATED_CDS"/>
    <property type="molecule type" value="Genomic_DNA"/>
</dbReference>
<dbReference type="PIR" id="S08039">
    <property type="entry name" value="S08039"/>
</dbReference>
<name>YPS2_LEPBY</name>
<sequence length="122" mass="13148">MKRRLIYSNGLHGLPTEIIACTEVQEKRYERTGEVAFALASLSWSDGIVEELGAIVLDSWKKCGVNAAKLPSGMLLSQNERVTSRVTNSRTESESNGNGNATGNTSSNANSNGNANGIYIRK</sequence>
<protein>
    <recommendedName>
        <fullName>Uncharacterized 13.1 kDa protein</fullName>
    </recommendedName>
    <alternativeName>
        <fullName>ORF2</fullName>
    </alternativeName>
</protein>
<feature type="chain" id="PRO_0000066414" description="Uncharacterized 13.1 kDa protein">
    <location>
        <begin position="1"/>
        <end position="122"/>
    </location>
</feature>
<feature type="region of interest" description="Disordered" evidence="1">
    <location>
        <begin position="79"/>
        <end position="122"/>
    </location>
</feature>
<feature type="compositionally biased region" description="Polar residues" evidence="1">
    <location>
        <begin position="79"/>
        <end position="90"/>
    </location>
</feature>
<feature type="compositionally biased region" description="Low complexity" evidence="1">
    <location>
        <begin position="94"/>
        <end position="122"/>
    </location>
</feature>
<organism>
    <name type="scientific">Leptolyngbya boryana</name>
    <name type="common">Plectonema boryanum</name>
    <dbReference type="NCBI Taxonomy" id="1184"/>
    <lineage>
        <taxon>Bacteria</taxon>
        <taxon>Bacillati</taxon>
        <taxon>Cyanobacteriota</taxon>
        <taxon>Cyanophyceae</taxon>
        <taxon>Leptolyngbyales</taxon>
        <taxon>Leptolyngbyaceae</taxon>
        <taxon>Leptolyngbya group</taxon>
        <taxon>Leptolyngbya</taxon>
    </lineage>
</organism>
<accession>P15734</accession>
<proteinExistence type="predicted"/>
<evidence type="ECO:0000256" key="1">
    <source>
        <dbReference type="SAM" id="MobiDB-lite"/>
    </source>
</evidence>
<reference key="1">
    <citation type="submission" date="1989-01" db="EMBL/GenBank/DDBJ databases">
        <authorList>
            <person name="Wickrema A."/>
            <person name="Barnum S.R."/>
            <person name="Jaworski J.G."/>
        </authorList>
    </citation>
    <scope>NUCLEOTIDE SEQUENCE [GENOMIC DNA]</scope>
    <source>
        <strain>ATCC 27894 / CCAP 1463/1 / IAM M-101 / PCC 6306 / UTEX 581</strain>
    </source>
</reference>
<geneLocation type="plasmid">
    <name>small</name>
</geneLocation>
<keyword id="KW-0614">Plasmid</keyword>